<keyword id="KW-0472">Membrane</keyword>
<keyword id="KW-1185">Reference proteome</keyword>
<keyword id="KW-0812">Transmembrane</keyword>
<keyword id="KW-1133">Transmembrane helix</keyword>
<feature type="chain" id="PRO_0000350890" description="Uncharacterized transmembrane protein DDB_G0283731">
    <location>
        <begin position="1"/>
        <end position="206"/>
    </location>
</feature>
<feature type="transmembrane region" description="Helical" evidence="1">
    <location>
        <begin position="150"/>
        <end position="166"/>
    </location>
</feature>
<feature type="region of interest" description="Disordered" evidence="2">
    <location>
        <begin position="81"/>
        <end position="132"/>
    </location>
</feature>
<feature type="compositionally biased region" description="Low complexity" evidence="2">
    <location>
        <begin position="82"/>
        <end position="96"/>
    </location>
</feature>
<feature type="compositionally biased region" description="Basic and acidic residues" evidence="2">
    <location>
        <begin position="103"/>
        <end position="123"/>
    </location>
</feature>
<comment type="subcellular location">
    <subcellularLocation>
        <location evidence="3">Membrane</location>
        <topology evidence="3">Single-pass membrane protein</topology>
    </subcellularLocation>
</comment>
<protein>
    <recommendedName>
        <fullName>Uncharacterized transmembrane protein DDB_G0283731</fullName>
    </recommendedName>
</protein>
<dbReference type="EMBL" id="AAFI02000056">
    <property type="protein sequence ID" value="EAL65632.1"/>
    <property type="molecule type" value="Genomic_DNA"/>
</dbReference>
<dbReference type="RefSeq" id="XP_638989.1">
    <property type="nucleotide sequence ID" value="XM_633897.1"/>
</dbReference>
<dbReference type="SMR" id="Q54QN4"/>
<dbReference type="FunCoup" id="Q54QN4">
    <property type="interactions" value="640"/>
</dbReference>
<dbReference type="PaxDb" id="44689-DDB0185654"/>
<dbReference type="EnsemblProtists" id="EAL65632">
    <property type="protein sequence ID" value="EAL65632"/>
    <property type="gene ID" value="DDB_G0283731"/>
</dbReference>
<dbReference type="GeneID" id="8624235"/>
<dbReference type="KEGG" id="ddi:DDB_G0283731"/>
<dbReference type="dictyBase" id="DDB_G0283731"/>
<dbReference type="VEuPathDB" id="AmoebaDB:DDB_G0283731"/>
<dbReference type="eggNOG" id="ENOG502RHYB">
    <property type="taxonomic scope" value="Eukaryota"/>
</dbReference>
<dbReference type="HOGENOM" id="CLU_1334031_0_0_1"/>
<dbReference type="InParanoid" id="Q54QN4"/>
<dbReference type="OMA" id="IVEVEIN"/>
<dbReference type="PRO" id="PR:Q54QN4"/>
<dbReference type="Proteomes" id="UP000002195">
    <property type="component" value="Chromosome 4"/>
</dbReference>
<dbReference type="GO" id="GO:0016020">
    <property type="term" value="C:membrane"/>
    <property type="evidence" value="ECO:0007669"/>
    <property type="project" value="UniProtKB-SubCell"/>
</dbReference>
<accession>Q54QN4</accession>
<reference key="1">
    <citation type="journal article" date="2005" name="Nature">
        <title>The genome of the social amoeba Dictyostelium discoideum.</title>
        <authorList>
            <person name="Eichinger L."/>
            <person name="Pachebat J.A."/>
            <person name="Gloeckner G."/>
            <person name="Rajandream M.A."/>
            <person name="Sucgang R."/>
            <person name="Berriman M."/>
            <person name="Song J."/>
            <person name="Olsen R."/>
            <person name="Szafranski K."/>
            <person name="Xu Q."/>
            <person name="Tunggal B."/>
            <person name="Kummerfeld S."/>
            <person name="Madera M."/>
            <person name="Konfortov B.A."/>
            <person name="Rivero F."/>
            <person name="Bankier A.T."/>
            <person name="Lehmann R."/>
            <person name="Hamlin N."/>
            <person name="Davies R."/>
            <person name="Gaudet P."/>
            <person name="Fey P."/>
            <person name="Pilcher K."/>
            <person name="Chen G."/>
            <person name="Saunders D."/>
            <person name="Sodergren E.J."/>
            <person name="Davis P."/>
            <person name="Kerhornou A."/>
            <person name="Nie X."/>
            <person name="Hall N."/>
            <person name="Anjard C."/>
            <person name="Hemphill L."/>
            <person name="Bason N."/>
            <person name="Farbrother P."/>
            <person name="Desany B."/>
            <person name="Just E."/>
            <person name="Morio T."/>
            <person name="Rost R."/>
            <person name="Churcher C.M."/>
            <person name="Cooper J."/>
            <person name="Haydock S."/>
            <person name="van Driessche N."/>
            <person name="Cronin A."/>
            <person name="Goodhead I."/>
            <person name="Muzny D.M."/>
            <person name="Mourier T."/>
            <person name="Pain A."/>
            <person name="Lu M."/>
            <person name="Harper D."/>
            <person name="Lindsay R."/>
            <person name="Hauser H."/>
            <person name="James K.D."/>
            <person name="Quiles M."/>
            <person name="Madan Babu M."/>
            <person name="Saito T."/>
            <person name="Buchrieser C."/>
            <person name="Wardroper A."/>
            <person name="Felder M."/>
            <person name="Thangavelu M."/>
            <person name="Johnson D."/>
            <person name="Knights A."/>
            <person name="Loulseged H."/>
            <person name="Mungall K.L."/>
            <person name="Oliver K."/>
            <person name="Price C."/>
            <person name="Quail M.A."/>
            <person name="Urushihara H."/>
            <person name="Hernandez J."/>
            <person name="Rabbinowitsch E."/>
            <person name="Steffen D."/>
            <person name="Sanders M."/>
            <person name="Ma J."/>
            <person name="Kohara Y."/>
            <person name="Sharp S."/>
            <person name="Simmonds M.N."/>
            <person name="Spiegler S."/>
            <person name="Tivey A."/>
            <person name="Sugano S."/>
            <person name="White B."/>
            <person name="Walker D."/>
            <person name="Woodward J.R."/>
            <person name="Winckler T."/>
            <person name="Tanaka Y."/>
            <person name="Shaulsky G."/>
            <person name="Schleicher M."/>
            <person name="Weinstock G.M."/>
            <person name="Rosenthal A."/>
            <person name="Cox E.C."/>
            <person name="Chisholm R.L."/>
            <person name="Gibbs R.A."/>
            <person name="Loomis W.F."/>
            <person name="Platzer M."/>
            <person name="Kay R.R."/>
            <person name="Williams J.G."/>
            <person name="Dear P.H."/>
            <person name="Noegel A.A."/>
            <person name="Barrell B.G."/>
            <person name="Kuspa A."/>
        </authorList>
    </citation>
    <scope>NUCLEOTIDE SEQUENCE [LARGE SCALE GENOMIC DNA]</scope>
    <source>
        <strain>AX4</strain>
    </source>
</reference>
<sequence>MLSRATRLLSTKNVVVNSIVKHTTIRSFASHGGGEAGGAYPTEPEAGTQMITRRVEFGDAVYSYKHGNFIVDPIQIRELAEEQQQQQHHVHGPGCSHGHHHDSHANDGHHDEHHDEHHDHVNPDDVEDEFPRGYFLNTPPSVPYPMNPYYLTALCLLPIIGSLFSIRYFDNKSENDYELFRSEYLEANPALKQKYYDITHKYPLSH</sequence>
<evidence type="ECO:0000255" key="1"/>
<evidence type="ECO:0000256" key="2">
    <source>
        <dbReference type="SAM" id="MobiDB-lite"/>
    </source>
</evidence>
<evidence type="ECO:0000305" key="3"/>
<gene>
    <name type="ORF">DDB_G0283731</name>
</gene>
<name>Y5654_DICDI</name>
<proteinExistence type="predicted"/>
<organism>
    <name type="scientific">Dictyostelium discoideum</name>
    <name type="common">Social amoeba</name>
    <dbReference type="NCBI Taxonomy" id="44689"/>
    <lineage>
        <taxon>Eukaryota</taxon>
        <taxon>Amoebozoa</taxon>
        <taxon>Evosea</taxon>
        <taxon>Eumycetozoa</taxon>
        <taxon>Dictyostelia</taxon>
        <taxon>Dictyosteliales</taxon>
        <taxon>Dictyosteliaceae</taxon>
        <taxon>Dictyostelium</taxon>
    </lineage>
</organism>